<comment type="function">
    <text>Tubulin is the major constituent of microtubules, a cylinder consisting of laterally associated linear protofilaments composed of alpha- and beta-tubulin heterodimers. Microtubules grow by the addition of GTP-tubulin dimers to the microtubule end, where a stabilizing cap forms. Below the cap, tubulin dimers are in GDP-bound state, owing to GTPase activity of alpha-tubulin.</text>
</comment>
<comment type="cofactor">
    <cofactor evidence="1">
        <name>Mg(2+)</name>
        <dbReference type="ChEBI" id="CHEBI:18420"/>
    </cofactor>
</comment>
<comment type="subunit">
    <text>Dimer of alpha and beta chains. A typical microtubule is a hollow water-filled tube with an outer diameter of 25 nm and an inner diameter of 15 nM. Alpha-beta heterodimers associate head-to-tail to form protofilaments running lengthwise along the microtubule wall with the beta-tubulin subunit facing the microtubule plus end conferring a structural polarity. Microtubules usually have 13 protofilaments but different protofilament numbers can be found in some organisms and specialized cells.</text>
</comment>
<comment type="subcellular location">
    <subcellularLocation>
        <location>Cytoplasm</location>
        <location>Cytoskeleton</location>
    </subcellularLocation>
</comment>
<comment type="similarity">
    <text evidence="4">Belongs to the tubulin family.</text>
</comment>
<keyword id="KW-0963">Cytoplasm</keyword>
<keyword id="KW-0206">Cytoskeleton</keyword>
<keyword id="KW-0342">GTP-binding</keyword>
<keyword id="KW-0460">Magnesium</keyword>
<keyword id="KW-0479">Metal-binding</keyword>
<keyword id="KW-0493">Microtubule</keyword>
<keyword id="KW-0547">Nucleotide-binding</keyword>
<feature type="chain" id="PRO_0000048342" description="Tubulin beta-1 chain">
    <location>
        <begin position="1"/>
        <end position="445"/>
    </location>
</feature>
<feature type="region of interest" description="Disordered" evidence="3">
    <location>
        <begin position="426"/>
        <end position="445"/>
    </location>
</feature>
<feature type="compositionally biased region" description="Acidic residues" evidence="3">
    <location>
        <begin position="429"/>
        <end position="445"/>
    </location>
</feature>
<feature type="binding site" evidence="2">
    <location>
        <position position="11"/>
    </location>
    <ligand>
        <name>GTP</name>
        <dbReference type="ChEBI" id="CHEBI:37565"/>
    </ligand>
</feature>
<feature type="binding site" evidence="1">
    <location>
        <position position="69"/>
    </location>
    <ligand>
        <name>GTP</name>
        <dbReference type="ChEBI" id="CHEBI:37565"/>
    </ligand>
</feature>
<feature type="binding site" evidence="1">
    <location>
        <position position="69"/>
    </location>
    <ligand>
        <name>Mg(2+)</name>
        <dbReference type="ChEBI" id="CHEBI:18420"/>
    </ligand>
</feature>
<feature type="binding site" evidence="2">
    <location>
        <position position="138"/>
    </location>
    <ligand>
        <name>GTP</name>
        <dbReference type="ChEBI" id="CHEBI:37565"/>
    </ligand>
</feature>
<feature type="binding site" evidence="2">
    <location>
        <position position="142"/>
    </location>
    <ligand>
        <name>GTP</name>
        <dbReference type="ChEBI" id="CHEBI:37565"/>
    </ligand>
</feature>
<feature type="binding site" evidence="2">
    <location>
        <position position="143"/>
    </location>
    <ligand>
        <name>GTP</name>
        <dbReference type="ChEBI" id="CHEBI:37565"/>
    </ligand>
</feature>
<feature type="binding site" evidence="2">
    <location>
        <position position="144"/>
    </location>
    <ligand>
        <name>GTP</name>
        <dbReference type="ChEBI" id="CHEBI:37565"/>
    </ligand>
</feature>
<feature type="binding site" evidence="2">
    <location>
        <position position="204"/>
    </location>
    <ligand>
        <name>GTP</name>
        <dbReference type="ChEBI" id="CHEBI:37565"/>
    </ligand>
</feature>
<feature type="binding site" evidence="2">
    <location>
        <position position="226"/>
    </location>
    <ligand>
        <name>GTP</name>
        <dbReference type="ChEBI" id="CHEBI:37565"/>
    </ligand>
</feature>
<proteinExistence type="evidence at transcript level"/>
<reference key="1">
    <citation type="journal article" date="1999" name="Plant Mol. Biol.">
        <title>Molecular characterization of four beta-tubulin genes from dinitroaniline susceptible and resistant biotypes of Eleusine indica.</title>
        <authorList>
            <person name="Yamamoto E."/>
            <person name="Baird W.V."/>
        </authorList>
    </citation>
    <scope>NUCLEOTIDE SEQUENCE [MRNA]</scope>
</reference>
<evidence type="ECO:0000250" key="1">
    <source>
        <dbReference type="UniProtKB" id="P68363"/>
    </source>
</evidence>
<evidence type="ECO:0000250" key="2">
    <source>
        <dbReference type="UniProtKB" id="Q13509"/>
    </source>
</evidence>
<evidence type="ECO:0000256" key="3">
    <source>
        <dbReference type="SAM" id="MobiDB-lite"/>
    </source>
</evidence>
<evidence type="ECO:0000305" key="4"/>
<dbReference type="EMBL" id="AF059287">
    <property type="protein sequence ID" value="AAD20178.1"/>
    <property type="molecule type" value="mRNA"/>
</dbReference>
<dbReference type="SMR" id="Q9ZPP0"/>
<dbReference type="GO" id="GO:0005737">
    <property type="term" value="C:cytoplasm"/>
    <property type="evidence" value="ECO:0007669"/>
    <property type="project" value="UniProtKB-KW"/>
</dbReference>
<dbReference type="GO" id="GO:0005874">
    <property type="term" value="C:microtubule"/>
    <property type="evidence" value="ECO:0007669"/>
    <property type="project" value="UniProtKB-KW"/>
</dbReference>
<dbReference type="GO" id="GO:0005525">
    <property type="term" value="F:GTP binding"/>
    <property type="evidence" value="ECO:0007669"/>
    <property type="project" value="UniProtKB-KW"/>
</dbReference>
<dbReference type="GO" id="GO:0003924">
    <property type="term" value="F:GTPase activity"/>
    <property type="evidence" value="ECO:0007669"/>
    <property type="project" value="InterPro"/>
</dbReference>
<dbReference type="GO" id="GO:0046872">
    <property type="term" value="F:metal ion binding"/>
    <property type="evidence" value="ECO:0007669"/>
    <property type="project" value="UniProtKB-KW"/>
</dbReference>
<dbReference type="GO" id="GO:0005200">
    <property type="term" value="F:structural constituent of cytoskeleton"/>
    <property type="evidence" value="ECO:0007669"/>
    <property type="project" value="InterPro"/>
</dbReference>
<dbReference type="GO" id="GO:0007017">
    <property type="term" value="P:microtubule-based process"/>
    <property type="evidence" value="ECO:0007669"/>
    <property type="project" value="InterPro"/>
</dbReference>
<dbReference type="CDD" id="cd02187">
    <property type="entry name" value="beta_tubulin"/>
    <property type="match status" value="1"/>
</dbReference>
<dbReference type="FunFam" id="1.10.287.600:FF:000002">
    <property type="entry name" value="Tubulin beta chain"/>
    <property type="match status" value="1"/>
</dbReference>
<dbReference type="FunFam" id="3.30.1330.20:FF:000002">
    <property type="entry name" value="Tubulin beta chain"/>
    <property type="match status" value="1"/>
</dbReference>
<dbReference type="FunFam" id="3.40.50.1440:FF:000005">
    <property type="entry name" value="Tubulin beta chain"/>
    <property type="match status" value="1"/>
</dbReference>
<dbReference type="Gene3D" id="1.10.287.600">
    <property type="entry name" value="Helix hairpin bin"/>
    <property type="match status" value="1"/>
</dbReference>
<dbReference type="Gene3D" id="3.30.1330.20">
    <property type="entry name" value="Tubulin/FtsZ, C-terminal domain"/>
    <property type="match status" value="1"/>
</dbReference>
<dbReference type="Gene3D" id="3.40.50.1440">
    <property type="entry name" value="Tubulin/FtsZ, GTPase domain"/>
    <property type="match status" value="1"/>
</dbReference>
<dbReference type="InterPro" id="IPR013838">
    <property type="entry name" value="Beta-tubulin_BS"/>
</dbReference>
<dbReference type="InterPro" id="IPR002453">
    <property type="entry name" value="Beta_tubulin"/>
</dbReference>
<dbReference type="InterPro" id="IPR008280">
    <property type="entry name" value="Tub_FtsZ_C"/>
</dbReference>
<dbReference type="InterPro" id="IPR000217">
    <property type="entry name" value="Tubulin"/>
</dbReference>
<dbReference type="InterPro" id="IPR037103">
    <property type="entry name" value="Tubulin/FtsZ-like_C"/>
</dbReference>
<dbReference type="InterPro" id="IPR018316">
    <property type="entry name" value="Tubulin/FtsZ_2-layer-sand-dom"/>
</dbReference>
<dbReference type="InterPro" id="IPR036525">
    <property type="entry name" value="Tubulin/FtsZ_GTPase_sf"/>
</dbReference>
<dbReference type="InterPro" id="IPR023123">
    <property type="entry name" value="Tubulin_C"/>
</dbReference>
<dbReference type="InterPro" id="IPR017975">
    <property type="entry name" value="Tubulin_CS"/>
</dbReference>
<dbReference type="InterPro" id="IPR003008">
    <property type="entry name" value="Tubulin_FtsZ_GTPase"/>
</dbReference>
<dbReference type="PANTHER" id="PTHR11588">
    <property type="entry name" value="TUBULIN"/>
    <property type="match status" value="1"/>
</dbReference>
<dbReference type="Pfam" id="PF00091">
    <property type="entry name" value="Tubulin"/>
    <property type="match status" value="1"/>
</dbReference>
<dbReference type="Pfam" id="PF03953">
    <property type="entry name" value="Tubulin_C"/>
    <property type="match status" value="1"/>
</dbReference>
<dbReference type="PRINTS" id="PR01163">
    <property type="entry name" value="BETATUBULIN"/>
</dbReference>
<dbReference type="PRINTS" id="PR01161">
    <property type="entry name" value="TUBULIN"/>
</dbReference>
<dbReference type="SMART" id="SM00864">
    <property type="entry name" value="Tubulin"/>
    <property type="match status" value="1"/>
</dbReference>
<dbReference type="SMART" id="SM00865">
    <property type="entry name" value="Tubulin_C"/>
    <property type="match status" value="1"/>
</dbReference>
<dbReference type="SUPFAM" id="SSF55307">
    <property type="entry name" value="Tubulin C-terminal domain-like"/>
    <property type="match status" value="1"/>
</dbReference>
<dbReference type="SUPFAM" id="SSF52490">
    <property type="entry name" value="Tubulin nucleotide-binding domain-like"/>
    <property type="match status" value="1"/>
</dbReference>
<dbReference type="PROSITE" id="PS00227">
    <property type="entry name" value="TUBULIN"/>
    <property type="match status" value="1"/>
</dbReference>
<dbReference type="PROSITE" id="PS00228">
    <property type="entry name" value="TUBULIN_B_AUTOREG"/>
    <property type="match status" value="1"/>
</dbReference>
<accession>Q9ZPP0</accession>
<sequence>MREILHIQGGQCGNQIGAKFWEVICDEHGIDHTGKYAGDSDLQLERINVYYNEASGGRFVPRAVLMDLEPGTMDSVRSGPFGQIFRPDNFVFGQSGAGNNWAKGHYTEGAELIDSVLDVVRKEAENCDCLQGFQVCHSLGGGTGSGMGTLLISKIREEYPDRMMLTFSVFPSPKVSDTVVEPYNATLSVHQLVENADECMVLDNEALYDICFRTLKLATPTFGDLNHLISATMSGVTCCLRFPGQLNSDLRKLAVNLIPFPRLHFFMVGFAPLTSRGSQQYRALTVPELTQQMWDSKNMMCAADPRHGRYLTASAMFRGKMSTKEVDEQMLNVQNKNSSYFVEWIPNNVKSSVCDIPPNGLKMASTFIGNSTSIQEMFRRVSEQFTAMFRRKAFLHWYTGEGMDEMEFTEAESNMNDLVAEYQQYQDATAEDEEEYEDEEEEMAA</sequence>
<gene>
    <name type="primary">TUBB1</name>
    <name type="synonym">TUB1</name>
</gene>
<name>TBB1_ELEIN</name>
<organism>
    <name type="scientific">Eleusine indica</name>
    <name type="common">Goosegrass</name>
    <name type="synonym">Cynosurus indicus</name>
    <dbReference type="NCBI Taxonomy" id="29674"/>
    <lineage>
        <taxon>Eukaryota</taxon>
        <taxon>Viridiplantae</taxon>
        <taxon>Streptophyta</taxon>
        <taxon>Embryophyta</taxon>
        <taxon>Tracheophyta</taxon>
        <taxon>Spermatophyta</taxon>
        <taxon>Magnoliopsida</taxon>
        <taxon>Liliopsida</taxon>
        <taxon>Poales</taxon>
        <taxon>Poaceae</taxon>
        <taxon>PACMAD clade</taxon>
        <taxon>Chloridoideae</taxon>
        <taxon>Cynodonteae</taxon>
        <taxon>Eleusininae</taxon>
        <taxon>Eleusine</taxon>
    </lineage>
</organism>
<protein>
    <recommendedName>
        <fullName>Tubulin beta-1 chain</fullName>
    </recommendedName>
    <alternativeName>
        <fullName>Beta-1-tubulin</fullName>
    </alternativeName>
</protein>